<gene>
    <name evidence="1" type="primary">recR</name>
    <name type="ordered locus">LJ_0425</name>
</gene>
<dbReference type="EMBL" id="AE017198">
    <property type="protein sequence ID" value="AAS08416.1"/>
    <property type="molecule type" value="Genomic_DNA"/>
</dbReference>
<dbReference type="RefSeq" id="WP_004896741.1">
    <property type="nucleotide sequence ID" value="NC_005362.1"/>
</dbReference>
<dbReference type="SMR" id="Q74KZ9"/>
<dbReference type="KEGG" id="ljo:LJ_0425"/>
<dbReference type="eggNOG" id="COG0353">
    <property type="taxonomic scope" value="Bacteria"/>
</dbReference>
<dbReference type="HOGENOM" id="CLU_060739_1_0_9"/>
<dbReference type="Proteomes" id="UP000000581">
    <property type="component" value="Chromosome"/>
</dbReference>
<dbReference type="GO" id="GO:0003677">
    <property type="term" value="F:DNA binding"/>
    <property type="evidence" value="ECO:0007669"/>
    <property type="project" value="UniProtKB-UniRule"/>
</dbReference>
<dbReference type="GO" id="GO:0008270">
    <property type="term" value="F:zinc ion binding"/>
    <property type="evidence" value="ECO:0007669"/>
    <property type="project" value="UniProtKB-KW"/>
</dbReference>
<dbReference type="GO" id="GO:0006310">
    <property type="term" value="P:DNA recombination"/>
    <property type="evidence" value="ECO:0007669"/>
    <property type="project" value="UniProtKB-UniRule"/>
</dbReference>
<dbReference type="GO" id="GO:0006281">
    <property type="term" value="P:DNA repair"/>
    <property type="evidence" value="ECO:0007669"/>
    <property type="project" value="UniProtKB-UniRule"/>
</dbReference>
<dbReference type="CDD" id="cd01025">
    <property type="entry name" value="TOPRIM_recR"/>
    <property type="match status" value="1"/>
</dbReference>
<dbReference type="Gene3D" id="3.30.60.80">
    <property type="match status" value="1"/>
</dbReference>
<dbReference type="Gene3D" id="3.40.1360.10">
    <property type="match status" value="1"/>
</dbReference>
<dbReference type="Gene3D" id="6.10.250.240">
    <property type="match status" value="1"/>
</dbReference>
<dbReference type="Gene3D" id="1.10.8.420">
    <property type="entry name" value="RecR Domain 1"/>
    <property type="match status" value="1"/>
</dbReference>
<dbReference type="HAMAP" id="MF_00017">
    <property type="entry name" value="RecR"/>
    <property type="match status" value="1"/>
</dbReference>
<dbReference type="InterPro" id="IPR000093">
    <property type="entry name" value="DNA_Rcmb_RecR"/>
</dbReference>
<dbReference type="InterPro" id="IPR023627">
    <property type="entry name" value="Rcmb_RecR"/>
</dbReference>
<dbReference type="InterPro" id="IPR015967">
    <property type="entry name" value="Rcmb_RecR_Znf"/>
</dbReference>
<dbReference type="InterPro" id="IPR006171">
    <property type="entry name" value="TOPRIM_dom"/>
</dbReference>
<dbReference type="InterPro" id="IPR034137">
    <property type="entry name" value="TOPRIM_RecR"/>
</dbReference>
<dbReference type="NCBIfam" id="TIGR00615">
    <property type="entry name" value="recR"/>
    <property type="match status" value="1"/>
</dbReference>
<dbReference type="PANTHER" id="PTHR30446">
    <property type="entry name" value="RECOMBINATION PROTEIN RECR"/>
    <property type="match status" value="1"/>
</dbReference>
<dbReference type="PANTHER" id="PTHR30446:SF0">
    <property type="entry name" value="RECOMBINATION PROTEIN RECR"/>
    <property type="match status" value="1"/>
</dbReference>
<dbReference type="Pfam" id="PF21175">
    <property type="entry name" value="RecR_C"/>
    <property type="match status" value="1"/>
</dbReference>
<dbReference type="Pfam" id="PF21176">
    <property type="entry name" value="RecR_HhH"/>
    <property type="match status" value="1"/>
</dbReference>
<dbReference type="Pfam" id="PF02132">
    <property type="entry name" value="RecR_ZnF"/>
    <property type="match status" value="1"/>
</dbReference>
<dbReference type="Pfam" id="PF13662">
    <property type="entry name" value="Toprim_4"/>
    <property type="match status" value="1"/>
</dbReference>
<dbReference type="SMART" id="SM00493">
    <property type="entry name" value="TOPRIM"/>
    <property type="match status" value="1"/>
</dbReference>
<dbReference type="SUPFAM" id="SSF111304">
    <property type="entry name" value="Recombination protein RecR"/>
    <property type="match status" value="1"/>
</dbReference>
<dbReference type="PROSITE" id="PS01300">
    <property type="entry name" value="RECR"/>
    <property type="match status" value="1"/>
</dbReference>
<dbReference type="PROSITE" id="PS50880">
    <property type="entry name" value="TOPRIM"/>
    <property type="match status" value="1"/>
</dbReference>
<sequence length="199" mass="22054">MQYPLPIARLIDNYMKLPGIGEKTATRLAFYTMDMPEQDVEDFSKSLMQVKENLHSCSICGNITESDPCEICRDSNRDRSTIMVVEQPKDVMAFEEMGEYNGLYHVLHGVLSPMDGVGPEEINIKSLITRLQKQDEVKEVILALNSSPEGEATAMYLAKLIKPAGLKVTRLAAGLAVGSDIEYANSITLKRAVQGRTDL</sequence>
<proteinExistence type="inferred from homology"/>
<keyword id="KW-0227">DNA damage</keyword>
<keyword id="KW-0233">DNA recombination</keyword>
<keyword id="KW-0234">DNA repair</keyword>
<keyword id="KW-0479">Metal-binding</keyword>
<keyword id="KW-0862">Zinc</keyword>
<keyword id="KW-0863">Zinc-finger</keyword>
<name>RECR_LACJO</name>
<organism>
    <name type="scientific">Lactobacillus johnsonii (strain CNCM I-12250 / La1 / NCC 533)</name>
    <dbReference type="NCBI Taxonomy" id="257314"/>
    <lineage>
        <taxon>Bacteria</taxon>
        <taxon>Bacillati</taxon>
        <taxon>Bacillota</taxon>
        <taxon>Bacilli</taxon>
        <taxon>Lactobacillales</taxon>
        <taxon>Lactobacillaceae</taxon>
        <taxon>Lactobacillus</taxon>
    </lineage>
</organism>
<protein>
    <recommendedName>
        <fullName evidence="1">Recombination protein RecR</fullName>
    </recommendedName>
</protein>
<accession>Q74KZ9</accession>
<comment type="function">
    <text evidence="1">May play a role in DNA repair. It seems to be involved in an RecBC-independent recombinational process of DNA repair. It may act with RecF and RecO.</text>
</comment>
<comment type="similarity">
    <text evidence="1">Belongs to the RecR family.</text>
</comment>
<reference key="1">
    <citation type="journal article" date="2004" name="Proc. Natl. Acad. Sci. U.S.A.">
        <title>The genome sequence of the probiotic intestinal bacterium Lactobacillus johnsonii NCC 533.</title>
        <authorList>
            <person name="Pridmore R.D."/>
            <person name="Berger B."/>
            <person name="Desiere F."/>
            <person name="Vilanova D."/>
            <person name="Barretto C."/>
            <person name="Pittet A.-C."/>
            <person name="Zwahlen M.-C."/>
            <person name="Rouvet M."/>
            <person name="Altermann E."/>
            <person name="Barrangou R."/>
            <person name="Mollet B."/>
            <person name="Mercenier A."/>
            <person name="Klaenhammer T."/>
            <person name="Arigoni F."/>
            <person name="Schell M.A."/>
        </authorList>
    </citation>
    <scope>NUCLEOTIDE SEQUENCE [LARGE SCALE GENOMIC DNA]</scope>
    <source>
        <strain>CNCM I-1225 / La1 / NCC 533</strain>
    </source>
</reference>
<evidence type="ECO:0000255" key="1">
    <source>
        <dbReference type="HAMAP-Rule" id="MF_00017"/>
    </source>
</evidence>
<feature type="chain" id="PRO_0000190334" description="Recombination protein RecR">
    <location>
        <begin position="1"/>
        <end position="199"/>
    </location>
</feature>
<feature type="domain" description="Toprim" evidence="1">
    <location>
        <begin position="80"/>
        <end position="176"/>
    </location>
</feature>
<feature type="zinc finger region" description="C4-type" evidence="1">
    <location>
        <begin position="57"/>
        <end position="72"/>
    </location>
</feature>